<evidence type="ECO:0000256" key="1">
    <source>
        <dbReference type="SAM" id="MobiDB-lite"/>
    </source>
</evidence>
<evidence type="ECO:0000269" key="2">
    <source>
    </source>
</evidence>
<proteinExistence type="evidence at transcript level"/>
<protein>
    <recommendedName>
        <fullName>Uncharacterized protein MT0599</fullName>
    </recommendedName>
</protein>
<feature type="chain" id="PRO_0000427350" description="Uncharacterized protein MT0599">
    <location>
        <begin position="1"/>
        <end position="113"/>
    </location>
</feature>
<feature type="region of interest" description="Disordered" evidence="1">
    <location>
        <begin position="1"/>
        <end position="22"/>
    </location>
</feature>
<feature type="region of interest" description="Disordered" evidence="1">
    <location>
        <begin position="90"/>
        <end position="113"/>
    </location>
</feature>
<feature type="compositionally biased region" description="Basic and acidic residues" evidence="1">
    <location>
        <begin position="90"/>
        <end position="99"/>
    </location>
</feature>
<feature type="compositionally biased region" description="Low complexity" evidence="1">
    <location>
        <begin position="100"/>
        <end position="113"/>
    </location>
</feature>
<sequence>MGEHAIKRHMRQRKPTKHPLAQKRGARILVLTDDPRRSVLIVPGCHLDSMRREKNAYYFQDGNALVGMVVSGGTVEYDADDRTYVVQLTDGRHTTESSFEHSSPSRSPQSDDL</sequence>
<name>Y0572_MYCTO</name>
<reference key="1">
    <citation type="journal article" date="2002" name="J. Bacteriol.">
        <title>Whole-genome comparison of Mycobacterium tuberculosis clinical and laboratory strains.</title>
        <authorList>
            <person name="Fleischmann R.D."/>
            <person name="Alland D."/>
            <person name="Eisen J.A."/>
            <person name="Carpenter L."/>
            <person name="White O."/>
            <person name="Peterson J.D."/>
            <person name="DeBoy R.T."/>
            <person name="Dodson R.J."/>
            <person name="Gwinn M.L."/>
            <person name="Haft D.H."/>
            <person name="Hickey E.K."/>
            <person name="Kolonay J.F."/>
            <person name="Nelson W.C."/>
            <person name="Umayam L.A."/>
            <person name="Ermolaeva M.D."/>
            <person name="Salzberg S.L."/>
            <person name="Delcher A."/>
            <person name="Utterback T.R."/>
            <person name="Weidman J.F."/>
            <person name="Khouri H.M."/>
            <person name="Gill J."/>
            <person name="Mikula A."/>
            <person name="Bishai W."/>
            <person name="Jacobs W.R. Jr."/>
            <person name="Venter J.C."/>
            <person name="Fraser C.M."/>
        </authorList>
    </citation>
    <scope>NUCLEOTIDE SEQUENCE [LARGE SCALE GENOMIC DNA]</scope>
    <source>
        <strain>CDC 1551 / Oshkosh</strain>
    </source>
</reference>
<reference key="2">
    <citation type="journal article" date="2003" name="J. Exp. Med.">
        <title>Inhibition of respiration by nitric oxide induces a Mycobacterium tuberculosis dormancy program.</title>
        <authorList>
            <person name="Voskuil M.I."/>
            <person name="Schnappinger D."/>
            <person name="Visconti K.C."/>
            <person name="Harrell M.I."/>
            <person name="Dolganov G.M."/>
            <person name="Sherman D.R."/>
            <person name="Schoolnik G.K."/>
        </authorList>
    </citation>
    <scope>INDUCTION BY NITRIC OXIDE (NO) AND BY HYPOXIA</scope>
    <scope>DORMANCY REGULON</scope>
    <source>
        <strain>CDC 1551 / Oshkosh</strain>
    </source>
</reference>
<keyword id="KW-1185">Reference proteome</keyword>
<comment type="induction">
    <text evidence="2">A member of the dormancy regulon. Induced in response to reduced oxygen tension (hypoxia) and low levels of nitric oxide (NO).</text>
</comment>
<organism>
    <name type="scientific">Mycobacterium tuberculosis (strain CDC 1551 / Oshkosh)</name>
    <dbReference type="NCBI Taxonomy" id="83331"/>
    <lineage>
        <taxon>Bacteria</taxon>
        <taxon>Bacillati</taxon>
        <taxon>Actinomycetota</taxon>
        <taxon>Actinomycetes</taxon>
        <taxon>Mycobacteriales</taxon>
        <taxon>Mycobacteriaceae</taxon>
        <taxon>Mycobacterium</taxon>
        <taxon>Mycobacterium tuberculosis complex</taxon>
    </lineage>
</organism>
<dbReference type="EMBL" id="AE000516">
    <property type="protein sequence ID" value="AAK44822.1"/>
    <property type="molecule type" value="Genomic_DNA"/>
</dbReference>
<dbReference type="PIR" id="C70933">
    <property type="entry name" value="C70933"/>
</dbReference>
<dbReference type="RefSeq" id="WP_003898507.1">
    <property type="nucleotide sequence ID" value="NZ_KK341227.1"/>
</dbReference>
<dbReference type="KEGG" id="mtc:MT0599"/>
<dbReference type="PATRIC" id="fig|83331.31.peg.631"/>
<dbReference type="HOGENOM" id="CLU_2247020_0_0_11"/>
<dbReference type="Proteomes" id="UP000001020">
    <property type="component" value="Chromosome"/>
</dbReference>
<accession>P9WM80</accession>
<accession>L0T426</accession>
<accession>O53769</accession>
<accession>Q7D9M1</accession>
<gene>
    <name type="ordered locus">MT0599</name>
</gene>